<name>TVB56_HUMAN</name>
<evidence type="ECO:0000255" key="1"/>
<evidence type="ECO:0000255" key="2">
    <source>
        <dbReference type="PROSITE-ProRule" id="PRU00114"/>
    </source>
</evidence>
<evidence type="ECO:0000303" key="3">
    <source>
    </source>
</evidence>
<evidence type="ECO:0000303" key="4">
    <source>
    </source>
</evidence>
<evidence type="ECO:0000303" key="5">
    <source>
    </source>
</evidence>
<evidence type="ECO:0000303" key="6">
    <source>
    </source>
</evidence>
<evidence type="ECO:0000303" key="7">
    <source>
    </source>
</evidence>
<evidence type="ECO:0000303" key="8">
    <source>
    </source>
</evidence>
<evidence type="ECO:0000303" key="9">
    <source ref="3"/>
</evidence>
<evidence type="ECO:0000305" key="10"/>
<gene>
    <name evidence="9" type="primary">TRBV5-6</name>
    <name evidence="8" type="synonym">TCRBV5S2</name>
</gene>
<feature type="signal peptide" evidence="1">
    <location>
        <begin position="1"/>
        <end position="21"/>
    </location>
</feature>
<feature type="chain" id="PRO_5010101711" description="T cell receptor beta variable 5-6" evidence="1">
    <location>
        <begin position="22"/>
        <end position="114"/>
    </location>
</feature>
<feature type="domain" description="Ig-like" evidence="2">
    <location>
        <begin position="22"/>
        <end position="114" status="greater than"/>
    </location>
</feature>
<feature type="glycosylation site" description="N-linked (GlcNAc...) asparagine" evidence="1">
    <location>
        <position position="90"/>
    </location>
</feature>
<feature type="disulfide bond" evidence="2">
    <location>
        <begin position="42"/>
        <end position="110"/>
    </location>
</feature>
<feature type="non-terminal residue">
    <location>
        <position position="114"/>
    </location>
</feature>
<organism>
    <name type="scientific">Homo sapiens</name>
    <name type="common">Human</name>
    <dbReference type="NCBI Taxonomy" id="9606"/>
    <lineage>
        <taxon>Eukaryota</taxon>
        <taxon>Metazoa</taxon>
        <taxon>Chordata</taxon>
        <taxon>Craniata</taxon>
        <taxon>Vertebrata</taxon>
        <taxon>Euteleostomi</taxon>
        <taxon>Mammalia</taxon>
        <taxon>Eutheria</taxon>
        <taxon>Euarchontoglires</taxon>
        <taxon>Primates</taxon>
        <taxon>Haplorrhini</taxon>
        <taxon>Catarrhini</taxon>
        <taxon>Hominidae</taxon>
        <taxon>Homo</taxon>
    </lineage>
</organism>
<comment type="function">
    <text evidence="3 5 6 7">V region of the variable domain of T cell receptor (TR) beta chain that participates in the antigen recognition (PubMed:24600447). Alpha-beta T cell receptors are antigen specific receptors which are essential to the immune response and are present on the cell surface of T lymphocytes. Recognize peptide-major histocompatibility (MH) (pMH) complexes that are displayed by antigen presenting cells (APC), a prerequisite for efficient T cell adaptive immunity against pathogens (PubMed:25493333). Binding of alpha-beta TR to pMH complex initiates TR-CD3 clustering on the cell surface and intracellular activation of LCK that phosphorylates the ITAM motifs of CD3G, CD3D, CD3E and CD247 enabling the recruitment of ZAP70. In turn ZAP70 phosphorylates LAT, which recruits numerous signaling molecules to form the LAT signalosome. The LAT signalosome propagates signal branching to three major signaling pathways, the calcium, the mitogen-activated protein kinase (MAPK) kinase and the nuclear factor NF-kappa-B (NF-kB) pathways, leading to the mobilization of transcription factors that are critical for gene expression and essential for T cell growth and differentiation (PubMed:23524462). The T cell repertoire is generated in the thymus, by V-(D)-J rearrangement. This repertoire is then shaped by intrathymic selection events to generate a peripheral T cell pool of self-MH restricted, non-autoaggressive T cells. Post-thymic interaction of alpha-beta TR with the pMH complexes shapes TR structural and functional avidity (PubMed:15040585).</text>
</comment>
<comment type="subunit">
    <text evidence="4">Alpha-beta TR is a heterodimer composed of an alpha and beta chain; disulfide-linked. The alpha-beta TR is associated with the transmembrane signaling CD3 coreceptor proteins to form the TR-CD3 (TcR or TCR). The assembly of alpha-beta TR heterodimers with CD3 occurs in the endoplasmic reticulum where a single alpha-beta TR heterodimer associates with one CD3D-CD3E heterodimer, one CD3G-CD3E heterodimer and one CD247 homodimer forming a stable octameric structure. CD3D-CD3E and CD3G-CD3E heterodimers preferentially associate with TR alpha and TR beta chains, respectively. The association of the CD247 homodimer is the last step of TcR assembly in the endoplasmic reticulum and is required for transport to the cell surface.</text>
</comment>
<comment type="subcellular location">
    <subcellularLocation>
        <location evidence="4">Cell membrane</location>
    </subcellularLocation>
</comment>
<comment type="polymorphism">
    <text evidence="10">There are several alleles. The sequence shown is that of IMGT allele TRBV5-6*01.</text>
</comment>
<protein>
    <recommendedName>
        <fullName evidence="9">T cell receptor beta variable 5-6</fullName>
    </recommendedName>
</protein>
<accession>A0A599</accession>
<proteinExistence type="inferred from homology"/>
<dbReference type="EMBL" id="L36092">
    <property type="protein sequence ID" value="AAC13328.1"/>
    <property type="molecule type" value="Genomic_DNA"/>
</dbReference>
<dbReference type="EMBL" id="AC233282">
    <property type="status" value="NOT_ANNOTATED_CDS"/>
    <property type="molecule type" value="Genomic_DNA"/>
</dbReference>
<dbReference type="EMBL" id="AC244196">
    <property type="status" value="NOT_ANNOTATED_CDS"/>
    <property type="molecule type" value="Genomic_DNA"/>
</dbReference>
<dbReference type="SMR" id="A0A599"/>
<dbReference type="FunCoup" id="A0A599">
    <property type="interactions" value="402"/>
</dbReference>
<dbReference type="IMGT_GENE-DB" id="TRBV5-6"/>
<dbReference type="GlyCosmos" id="A0A599">
    <property type="glycosylation" value="1 site, No reported glycans"/>
</dbReference>
<dbReference type="GlyGen" id="A0A599">
    <property type="glycosylation" value="1 site"/>
</dbReference>
<dbReference type="BioMuta" id="TRBV5-6"/>
<dbReference type="MassIVE" id="A0A599"/>
<dbReference type="Ensembl" id="ENST00000390375.2">
    <property type="protein sequence ID" value="ENSP00000374898.2"/>
    <property type="gene ID" value="ENSG00000211728.2"/>
</dbReference>
<dbReference type="Ensembl" id="ENST00000632216.1">
    <property type="protein sequence ID" value="ENSP00000487850.1"/>
    <property type="gene ID" value="ENSG00000282098.1"/>
</dbReference>
<dbReference type="UCSC" id="uc033als.2">
    <property type="organism name" value="human"/>
</dbReference>
<dbReference type="AGR" id="HGNC:12223"/>
<dbReference type="GeneCards" id="TRBV5-6"/>
<dbReference type="HGNC" id="HGNC:12223">
    <property type="gene designation" value="TRBV5-6"/>
</dbReference>
<dbReference type="HPA" id="ENSG00000211728">
    <property type="expression patterns" value="Tissue enriched (lymphoid)"/>
</dbReference>
<dbReference type="neXtProt" id="NX_A0A599"/>
<dbReference type="OpenTargets" id="ENSG00000211728"/>
<dbReference type="VEuPathDB" id="HostDB:ENSG00000211728"/>
<dbReference type="GeneTree" id="ENSGT00940000154270"/>
<dbReference type="HOGENOM" id="CLU_077975_9_4_1"/>
<dbReference type="InParanoid" id="A0A599"/>
<dbReference type="OMA" id="AKGQQMT"/>
<dbReference type="OrthoDB" id="9803478at2759"/>
<dbReference type="PAN-GO" id="A0A599">
    <property type="GO annotations" value="2 GO annotations based on evolutionary models"/>
</dbReference>
<dbReference type="PhylomeDB" id="A0A599"/>
<dbReference type="SignaLink" id="A0A599"/>
<dbReference type="ChiTaRS" id="TRBV5-6">
    <property type="organism name" value="human"/>
</dbReference>
<dbReference type="Pharos" id="A0A599">
    <property type="development level" value="Tdark"/>
</dbReference>
<dbReference type="PRO" id="PR:A0A599"/>
<dbReference type="Proteomes" id="UP000005640">
    <property type="component" value="Chromosome 7"/>
</dbReference>
<dbReference type="RNAct" id="A0A599">
    <property type="molecule type" value="protein"/>
</dbReference>
<dbReference type="Bgee" id="ENSG00000211728">
    <property type="expression patterns" value="Expressed in lymph node and 77 other cell types or tissues"/>
</dbReference>
<dbReference type="GO" id="GO:0005886">
    <property type="term" value="C:plasma membrane"/>
    <property type="evidence" value="ECO:0000318"/>
    <property type="project" value="GO_Central"/>
</dbReference>
<dbReference type="GO" id="GO:0042101">
    <property type="term" value="C:T cell receptor complex"/>
    <property type="evidence" value="ECO:0007669"/>
    <property type="project" value="UniProtKB-KW"/>
</dbReference>
<dbReference type="GO" id="GO:0002250">
    <property type="term" value="P:adaptive immune response"/>
    <property type="evidence" value="ECO:0007669"/>
    <property type="project" value="UniProtKB-KW"/>
</dbReference>
<dbReference type="GO" id="GO:0007166">
    <property type="term" value="P:cell surface receptor signaling pathway"/>
    <property type="evidence" value="ECO:0000318"/>
    <property type="project" value="GO_Central"/>
</dbReference>
<dbReference type="Gene3D" id="2.60.40.10">
    <property type="entry name" value="Immunoglobulins"/>
    <property type="match status" value="1"/>
</dbReference>
<dbReference type="InterPro" id="IPR007110">
    <property type="entry name" value="Ig-like_dom"/>
</dbReference>
<dbReference type="InterPro" id="IPR036179">
    <property type="entry name" value="Ig-like_dom_sf"/>
</dbReference>
<dbReference type="InterPro" id="IPR013783">
    <property type="entry name" value="Ig-like_fold"/>
</dbReference>
<dbReference type="InterPro" id="IPR013106">
    <property type="entry name" value="Ig_V-set"/>
</dbReference>
<dbReference type="InterPro" id="IPR050413">
    <property type="entry name" value="TCR_beta_variable"/>
</dbReference>
<dbReference type="PANTHER" id="PTHR23268:SF6">
    <property type="entry name" value="T CELL RECEPTOR BETA VARIABLE 5-5-RELATED"/>
    <property type="match status" value="1"/>
</dbReference>
<dbReference type="PANTHER" id="PTHR23268">
    <property type="entry name" value="T-CELL RECEPTOR BETA CHAIN"/>
    <property type="match status" value="1"/>
</dbReference>
<dbReference type="Pfam" id="PF07686">
    <property type="entry name" value="V-set"/>
    <property type="match status" value="1"/>
</dbReference>
<dbReference type="SUPFAM" id="SSF48726">
    <property type="entry name" value="Immunoglobulin"/>
    <property type="match status" value="1"/>
</dbReference>
<dbReference type="PROSITE" id="PS50835">
    <property type="entry name" value="IG_LIKE"/>
    <property type="match status" value="1"/>
</dbReference>
<sequence length="114" mass="12565">MGPGLLCWALLCLLGAGLVDAGVTQSPTHLIKTRGQQVTLRCSPKSGHDTVSWYQQALGQGPQFIFQYYEEEERQRGNFPDRFSGHQFPNYSSELNVNALLLGDSALYLCASSL</sequence>
<keyword id="KW-1064">Adaptive immunity</keyword>
<keyword id="KW-1003">Cell membrane</keyword>
<keyword id="KW-1015">Disulfide bond</keyword>
<keyword id="KW-0325">Glycoprotein</keyword>
<keyword id="KW-0391">Immunity</keyword>
<keyword id="KW-0393">Immunoglobulin domain</keyword>
<keyword id="KW-0472">Membrane</keyword>
<keyword id="KW-0675">Receptor</keyword>
<keyword id="KW-1185">Reference proteome</keyword>
<keyword id="KW-0732">Signal</keyword>
<keyword id="KW-1279">T cell receptor</keyword>
<reference key="1">
    <citation type="journal article" date="1996" name="Science">
        <title>The complete 685-kilobase DNA sequence of the human beta T cell receptor locus.</title>
        <authorList>
            <person name="Rowen L."/>
            <person name="Koop B.F."/>
            <person name="Hood L."/>
        </authorList>
    </citation>
    <scope>NUCLEOTIDE SEQUENCE [GENOMIC DNA] (IMGT ALLELE TRBV5-6*01)</scope>
</reference>
<reference key="2">
    <citation type="journal article" date="2003" name="Nature">
        <title>The DNA sequence of human chromosome 7.</title>
        <authorList>
            <person name="Hillier L.W."/>
            <person name="Fulton R.S."/>
            <person name="Fulton L.A."/>
            <person name="Graves T.A."/>
            <person name="Pepin K.H."/>
            <person name="Wagner-McPherson C."/>
            <person name="Layman D."/>
            <person name="Maas J."/>
            <person name="Jaeger S."/>
            <person name="Walker R."/>
            <person name="Wylie K."/>
            <person name="Sekhon M."/>
            <person name="Becker M.C."/>
            <person name="O'Laughlin M.D."/>
            <person name="Schaller M.E."/>
            <person name="Fewell G.A."/>
            <person name="Delehaunty K.D."/>
            <person name="Miner T.L."/>
            <person name="Nash W.E."/>
            <person name="Cordes M."/>
            <person name="Du H."/>
            <person name="Sun H."/>
            <person name="Edwards J."/>
            <person name="Bradshaw-Cordum H."/>
            <person name="Ali J."/>
            <person name="Andrews S."/>
            <person name="Isak A."/>
            <person name="Vanbrunt A."/>
            <person name="Nguyen C."/>
            <person name="Du F."/>
            <person name="Lamar B."/>
            <person name="Courtney L."/>
            <person name="Kalicki J."/>
            <person name="Ozersky P."/>
            <person name="Bielicki L."/>
            <person name="Scott K."/>
            <person name="Holmes A."/>
            <person name="Harkins R."/>
            <person name="Harris A."/>
            <person name="Strong C.M."/>
            <person name="Hou S."/>
            <person name="Tomlinson C."/>
            <person name="Dauphin-Kohlberg S."/>
            <person name="Kozlowicz-Reilly A."/>
            <person name="Leonard S."/>
            <person name="Rohlfing T."/>
            <person name="Rock S.M."/>
            <person name="Tin-Wollam A.-M."/>
            <person name="Abbott A."/>
            <person name="Minx P."/>
            <person name="Maupin R."/>
            <person name="Strowmatt C."/>
            <person name="Latreille P."/>
            <person name="Miller N."/>
            <person name="Johnson D."/>
            <person name="Murray J."/>
            <person name="Woessner J.P."/>
            <person name="Wendl M.C."/>
            <person name="Yang S.-P."/>
            <person name="Schultz B.R."/>
            <person name="Wallis J.W."/>
            <person name="Spieth J."/>
            <person name="Bieri T.A."/>
            <person name="Nelson J.O."/>
            <person name="Berkowicz N."/>
            <person name="Wohldmann P.E."/>
            <person name="Cook L.L."/>
            <person name="Hickenbotham M.T."/>
            <person name="Eldred J."/>
            <person name="Williams D."/>
            <person name="Bedell J.A."/>
            <person name="Mardis E.R."/>
            <person name="Clifton S.W."/>
            <person name="Chissoe S.L."/>
            <person name="Marra M.A."/>
            <person name="Raymond C."/>
            <person name="Haugen E."/>
            <person name="Gillett W."/>
            <person name="Zhou Y."/>
            <person name="James R."/>
            <person name="Phelps K."/>
            <person name="Iadanoto S."/>
            <person name="Bubb K."/>
            <person name="Simms E."/>
            <person name="Levy R."/>
            <person name="Clendenning J."/>
            <person name="Kaul R."/>
            <person name="Kent W.J."/>
            <person name="Furey T.S."/>
            <person name="Baertsch R.A."/>
            <person name="Brent M.R."/>
            <person name="Keibler E."/>
            <person name="Flicek P."/>
            <person name="Bork P."/>
            <person name="Suyama M."/>
            <person name="Bailey J.A."/>
            <person name="Portnoy M.E."/>
            <person name="Torrents D."/>
            <person name="Chinwalla A.T."/>
            <person name="Gish W.R."/>
            <person name="Eddy S.R."/>
            <person name="McPherson J.D."/>
            <person name="Olson M.V."/>
            <person name="Eichler E.E."/>
            <person name="Green E.D."/>
            <person name="Waterston R.H."/>
            <person name="Wilson R.K."/>
        </authorList>
    </citation>
    <scope>NUCLEOTIDE SEQUENCE [LARGE SCALE GENOMIC DNA] (IMGT ALLELE TRBV5-6*01)</scope>
</reference>
<reference key="3">
    <citation type="book" date="2001" name="The T Cell Receptor FactsBook.">
        <title>The T Cell Receptor FactsBook.</title>
        <editorList>
            <person name="Lefranc M.P."/>
            <person name="Lefranc G."/>
        </editorList>
        <authorList>
            <person name="Lefranc M.P."/>
            <person name="Lefranc G."/>
        </authorList>
    </citation>
    <scope>NOMENCLATURE</scope>
</reference>
<reference key="4">
    <citation type="journal article" date="2004" name="Nat. Rev. Immunol.">
        <title>The many important facets of T-cell repertoire diversity.</title>
        <authorList>
            <person name="Nikolich-Zugich J."/>
            <person name="Slifka M.K."/>
            <person name="Messaoudi I."/>
        </authorList>
    </citation>
    <scope>REVIEW ON T CELL REPERTOIRE DIVERSITY</scope>
</reference>
<reference key="5">
    <citation type="journal article" date="2010" name="Cold Spring Harb. Perspect. Biol.">
        <title>Structural biology of the T-cell receptor: insights into receptor assembly, ligand recognition, and initiation of signaling.</title>
        <authorList>
            <person name="Wucherpfennig K.W."/>
            <person name="Gagnon E."/>
            <person name="Call M.J."/>
            <person name="Huseby E.S."/>
            <person name="Call M.E."/>
        </authorList>
    </citation>
    <scope>REVIEW ON T CELL RECEPTOR-CD3 COMPLEX ASSEMBLY</scope>
    <scope>SUBCELLULAR LOCATION</scope>
</reference>
<reference key="6">
    <citation type="journal article" date="2013" name="Nat. Rev. Immunol.">
        <title>T cell receptor signalling networks: branched, diversified and bounded.</title>
        <authorList>
            <person name="Brownlie R.J."/>
            <person name="Zamoyska R."/>
        </authorList>
    </citation>
    <scope>REVIEW ON T CELL RECEPTOR SIGNALING</scope>
</reference>
<reference key="7">
    <citation type="journal article" date="2014" name="Front. Immunol.">
        <title>Immunoglobulin and T Cell Receptor Genes: IMGT((R)) and the Birth and Rise of Immunoinformatics.</title>
        <authorList>
            <person name="Lefranc M.P."/>
        </authorList>
    </citation>
    <scope>NOMENCLATURE</scope>
</reference>
<reference key="8">
    <citation type="journal article" date="2015" name="Annu. Rev. Immunol.">
        <title>T cell antigen receptor recognition of antigen-presenting molecules.</title>
        <authorList>
            <person name="Rossjohn J."/>
            <person name="Gras S."/>
            <person name="Miles J.J."/>
            <person name="Turner S.J."/>
            <person name="Godfrey D.I."/>
            <person name="McCluskey J."/>
        </authorList>
    </citation>
    <scope>REVIEW ON FUNCTION</scope>
</reference>